<reference key="1">
    <citation type="journal article" date="2008" name="Plant Mol. Biol.">
        <title>Purification, cloning, functional expression and characterization of perakine reductase: the first example from the AKR enzyme family, extending the alkaloidal network of the plant Rauvolfia.</title>
        <authorList>
            <person name="Sun L."/>
            <person name="Ruppert M."/>
            <person name="Sheludko Y."/>
            <person name="Warzecha H."/>
            <person name="Zhao Y."/>
            <person name="Stockigt J."/>
        </authorList>
    </citation>
    <scope>NUCLEOTIDE SEQUENCE [MRNA]</scope>
    <scope>MUTAGENESIS OF ASP-52; TYR-57; LYS-84 AND HIS-126</scope>
    <scope>FUNCTION</scope>
    <scope>CATALYTIC ACTIVITY</scope>
    <scope>BIOPHYSICOCHEMICAL PROPERTIES</scope>
</reference>
<reference key="2">
    <citation type="journal article" date="2006" name="Acta Crystallogr. F">
        <title>Expression, purification, crystallization and preliminary X-ray analysis of perakine reductase, a new member of the aldo-keto reductase enzyme superfamily from higher plants.</title>
        <authorList>
            <person name="Rosenthal C."/>
            <person name="Mueller U."/>
            <person name="Panjikar S."/>
            <person name="Sun L."/>
            <person name="Ruppert M."/>
            <person name="Zhao Y."/>
            <person name="Stockigt J."/>
        </authorList>
    </citation>
    <scope>CRYSTALLIZATION</scope>
    <scope>CATALYTIC ACTIVITY</scope>
    <scope>BIOPHYSICOCHEMICAL PROPERTIES</scope>
</reference>
<keyword id="KW-0002">3D-structure</keyword>
<keyword id="KW-0017">Alkaloid metabolism</keyword>
<keyword id="KW-0521">NADP</keyword>
<keyword id="KW-0560">Oxidoreductase</keyword>
<proteinExistence type="evidence at protein level"/>
<organism>
    <name type="scientific">Rauvolfia serpentina</name>
    <name type="common">Serpentine wood</name>
    <name type="synonym">Ophioxylon serpentinum</name>
    <dbReference type="NCBI Taxonomy" id="4060"/>
    <lineage>
        <taxon>Eukaryota</taxon>
        <taxon>Viridiplantae</taxon>
        <taxon>Streptophyta</taxon>
        <taxon>Embryophyta</taxon>
        <taxon>Tracheophyta</taxon>
        <taxon>Spermatophyta</taxon>
        <taxon>Magnoliopsida</taxon>
        <taxon>eudicotyledons</taxon>
        <taxon>Gunneridae</taxon>
        <taxon>Pentapetalae</taxon>
        <taxon>asterids</taxon>
        <taxon>lamiids</taxon>
        <taxon>Gentianales</taxon>
        <taxon>Apocynaceae</taxon>
        <taxon>Rauvolfioideae</taxon>
        <taxon>Vinceae</taxon>
        <taxon>Rauvolfiinae</taxon>
        <taxon>Rauvolfia</taxon>
    </lineage>
</organism>
<accession>Q3L181</accession>
<feature type="chain" id="PRO_0000415739" description="Perakine reductase">
    <location>
        <begin position="1"/>
        <end position="337"/>
    </location>
</feature>
<feature type="active site" description="Proton donor" evidence="4">
    <location>
        <position position="57"/>
    </location>
</feature>
<feature type="binding site" evidence="1">
    <location>
        <position position="126"/>
    </location>
    <ligand>
        <name>substrate</name>
    </ligand>
</feature>
<feature type="binding site" evidence="1">
    <location>
        <begin position="205"/>
        <end position="214"/>
    </location>
    <ligand>
        <name>NADP(+)</name>
        <dbReference type="ChEBI" id="CHEBI:58349"/>
    </ligand>
</feature>
<feature type="mutagenesis site" description="99% loss of activity." evidence="3">
    <original>D</original>
    <variation>A</variation>
    <location>
        <position position="52"/>
    </location>
</feature>
<feature type="mutagenesis site" description="99% loss of activity." evidence="3">
    <original>Y</original>
    <variation>A</variation>
    <location>
        <position position="57"/>
    </location>
</feature>
<feature type="mutagenesis site" description="Total loss of activity." evidence="3">
    <original>K</original>
    <variation>A</variation>
    <location>
        <position position="84"/>
    </location>
</feature>
<feature type="mutagenesis site" description="98% loss of activity." evidence="3">
    <original>H</original>
    <variation>A</variation>
    <location>
        <position position="126"/>
    </location>
</feature>
<feature type="strand" evidence="6">
    <location>
        <begin position="3"/>
        <end position="5"/>
    </location>
</feature>
<feature type="strand" evidence="6">
    <location>
        <begin position="7"/>
        <end position="10"/>
    </location>
</feature>
<feature type="strand" evidence="6">
    <location>
        <begin position="12"/>
        <end position="16"/>
    </location>
</feature>
<feature type="helix" evidence="6">
    <location>
        <begin position="21"/>
        <end position="23"/>
    </location>
</feature>
<feature type="strand" evidence="7">
    <location>
        <begin position="27"/>
        <end position="29"/>
    </location>
</feature>
<feature type="helix" evidence="6">
    <location>
        <begin position="33"/>
        <end position="45"/>
    </location>
</feature>
<feature type="strand" evidence="6">
    <location>
        <begin position="50"/>
        <end position="52"/>
    </location>
</feature>
<feature type="strand" evidence="6">
    <location>
        <begin position="57"/>
        <end position="59"/>
    </location>
</feature>
<feature type="helix" evidence="6">
    <location>
        <begin position="62"/>
        <end position="71"/>
    </location>
</feature>
<feature type="helix" evidence="6">
    <location>
        <begin position="76"/>
        <end position="78"/>
    </location>
</feature>
<feature type="strand" evidence="6">
    <location>
        <begin position="80"/>
        <end position="85"/>
    </location>
</feature>
<feature type="strand" evidence="6">
    <location>
        <begin position="87"/>
        <end position="91"/>
    </location>
</feature>
<feature type="strand" evidence="6">
    <location>
        <begin position="94"/>
        <end position="97"/>
    </location>
</feature>
<feature type="helix" evidence="6">
    <location>
        <begin position="101"/>
        <end position="115"/>
    </location>
</feature>
<feature type="strand" evidence="6">
    <location>
        <begin position="120"/>
        <end position="127"/>
    </location>
</feature>
<feature type="helix" evidence="6">
    <location>
        <begin position="134"/>
        <end position="141"/>
    </location>
</feature>
<feature type="turn" evidence="6">
    <location>
        <begin position="144"/>
        <end position="148"/>
    </location>
</feature>
<feature type="strand" evidence="6">
    <location>
        <begin position="149"/>
        <end position="157"/>
    </location>
</feature>
<feature type="helix" evidence="6">
    <location>
        <begin position="160"/>
        <end position="169"/>
    </location>
</feature>
<feature type="strand" evidence="6">
    <location>
        <begin position="174"/>
        <end position="178"/>
    </location>
</feature>
<feature type="helix" evidence="6">
    <location>
        <begin position="185"/>
        <end position="187"/>
    </location>
</feature>
<feature type="helix" evidence="6">
    <location>
        <begin position="190"/>
        <end position="197"/>
    </location>
</feature>
<feature type="strand" evidence="6">
    <location>
        <begin position="200"/>
        <end position="205"/>
    </location>
</feature>
<feature type="helix" evidence="6">
    <location>
        <begin position="208"/>
        <end position="218"/>
    </location>
</feature>
<feature type="helix" evidence="6">
    <location>
        <begin position="246"/>
        <end position="254"/>
    </location>
</feature>
<feature type="helix" evidence="6">
    <location>
        <begin position="259"/>
        <end position="268"/>
    </location>
</feature>
<feature type="helix" evidence="6">
    <location>
        <begin position="283"/>
        <end position="291"/>
    </location>
</feature>
<feature type="helix" evidence="6">
    <location>
        <begin position="292"/>
        <end position="294"/>
    </location>
</feature>
<feature type="helix" evidence="6">
    <location>
        <begin position="299"/>
        <end position="307"/>
    </location>
</feature>
<feature type="strand" evidence="5">
    <location>
        <begin position="313"/>
        <end position="316"/>
    </location>
</feature>
<feature type="strand" evidence="5">
    <location>
        <begin position="322"/>
        <end position="325"/>
    </location>
</feature>
<evidence type="ECO:0000250" key="1"/>
<evidence type="ECO:0000269" key="2">
    <source>
    </source>
</evidence>
<evidence type="ECO:0000269" key="3">
    <source>
    </source>
</evidence>
<evidence type="ECO:0000305" key="4"/>
<evidence type="ECO:0007829" key="5">
    <source>
        <dbReference type="PDB" id="3UYI"/>
    </source>
</evidence>
<evidence type="ECO:0007829" key="6">
    <source>
        <dbReference type="PDB" id="3V0S"/>
    </source>
</evidence>
<evidence type="ECO:0007829" key="7">
    <source>
        <dbReference type="PDB" id="3V0U"/>
    </source>
</evidence>
<name>PERR_RAUSE</name>
<dbReference type="EC" id="1.1.1.317"/>
<dbReference type="EMBL" id="AY766462">
    <property type="protein sequence ID" value="AAX11684.1"/>
    <property type="molecule type" value="mRNA"/>
</dbReference>
<dbReference type="PDB" id="3UYI">
    <property type="method" value="X-ray"/>
    <property type="resolution" value="2.31 A"/>
    <property type="chains" value="A=1-336"/>
</dbReference>
<dbReference type="PDB" id="3V0S">
    <property type="method" value="X-ray"/>
    <property type="resolution" value="1.77 A"/>
    <property type="chains" value="A=1-337"/>
</dbReference>
<dbReference type="PDB" id="3V0T">
    <property type="method" value="X-ray"/>
    <property type="resolution" value="2.33 A"/>
    <property type="chains" value="A=1-337"/>
</dbReference>
<dbReference type="PDB" id="3V0U">
    <property type="method" value="X-ray"/>
    <property type="resolution" value="2.20 A"/>
    <property type="chains" value="A=1-337"/>
</dbReference>
<dbReference type="PDBsum" id="3UYI"/>
<dbReference type="PDBsum" id="3V0S"/>
<dbReference type="PDBsum" id="3V0T"/>
<dbReference type="PDBsum" id="3V0U"/>
<dbReference type="SMR" id="Q3L181"/>
<dbReference type="KEGG" id="ag:AAX11684"/>
<dbReference type="BioCyc" id="MetaCyc:MONOMERMETA-16871"/>
<dbReference type="BRENDA" id="1.1.1.317">
    <property type="organism ID" value="5309"/>
</dbReference>
<dbReference type="EvolutionaryTrace" id="Q3L181"/>
<dbReference type="GO" id="GO:0005737">
    <property type="term" value="C:cytoplasm"/>
    <property type="evidence" value="ECO:0007669"/>
    <property type="project" value="TreeGrafter"/>
</dbReference>
<dbReference type="GO" id="GO:0004033">
    <property type="term" value="F:aldo-keto reductase (NADPH) activity"/>
    <property type="evidence" value="ECO:0007669"/>
    <property type="project" value="TreeGrafter"/>
</dbReference>
<dbReference type="GO" id="GO:0009820">
    <property type="term" value="P:alkaloid metabolic process"/>
    <property type="evidence" value="ECO:0007669"/>
    <property type="project" value="UniProtKB-KW"/>
</dbReference>
<dbReference type="CDD" id="cd19145">
    <property type="entry name" value="AKR_AKR13D1"/>
    <property type="match status" value="1"/>
</dbReference>
<dbReference type="Gene3D" id="3.20.20.100">
    <property type="entry name" value="NADP-dependent oxidoreductase domain"/>
    <property type="match status" value="1"/>
</dbReference>
<dbReference type="InterPro" id="IPR050791">
    <property type="entry name" value="Aldo-Keto_reductase"/>
</dbReference>
<dbReference type="InterPro" id="IPR023210">
    <property type="entry name" value="NADP_OxRdtase_dom"/>
</dbReference>
<dbReference type="InterPro" id="IPR036812">
    <property type="entry name" value="NADP_OxRdtase_dom_sf"/>
</dbReference>
<dbReference type="PANTHER" id="PTHR43625">
    <property type="entry name" value="AFLATOXIN B1 ALDEHYDE REDUCTASE"/>
    <property type="match status" value="1"/>
</dbReference>
<dbReference type="PANTHER" id="PTHR43625:SF81">
    <property type="entry name" value="OS01G0618100 PROTEIN"/>
    <property type="match status" value="1"/>
</dbReference>
<dbReference type="Pfam" id="PF00248">
    <property type="entry name" value="Aldo_ket_red"/>
    <property type="match status" value="1"/>
</dbReference>
<dbReference type="SUPFAM" id="SSF51430">
    <property type="entry name" value="NAD(P)-linked oxidoreductase"/>
    <property type="match status" value="1"/>
</dbReference>
<protein>
    <recommendedName>
        <fullName>Perakine reductase</fullName>
        <ecNumber>1.1.1.317</ecNumber>
    </recommendedName>
</protein>
<comment type="function">
    <text evidence="3">Aldo-keto reductase involved in the biosynthesis of monoterpenoid indole alkaloids. Broad substrate specificity enzyme with a high selectivity in the group of alkaloids. Can use perakine, 19(S),20(R)-dihydro-peraksine-17,21-al, cinnamic aldehyde, p-coumaric aldehyde and 3-(3,4,5-trimethoxyphenyl)propanal as substrates, but not ketosteroids such as progesterone. NADPH could not be replaced by NADH.</text>
</comment>
<comment type="catalytic activity">
    <reaction evidence="2 3">
        <text>raucaffrinoline + NADP(+) = perakine + NADPH + H(+)</text>
        <dbReference type="Rhea" id="RHEA:31675"/>
        <dbReference type="ChEBI" id="CHEBI:15378"/>
        <dbReference type="ChEBI" id="CHEBI:57783"/>
        <dbReference type="ChEBI" id="CHEBI:58349"/>
        <dbReference type="ChEBI" id="CHEBI:63167"/>
        <dbReference type="ChEBI" id="CHEBI:63168"/>
        <dbReference type="EC" id="1.1.1.317"/>
    </reaction>
</comment>
<comment type="biophysicochemical properties">
    <kinetics>
        <KM evidence="2 3">0.28 mM for 4-nitrobenzaldehyde</KM>
        <KM evidence="2 3">0.83 mM for perakine</KM>
        <KM evidence="2 3">1.29 mM for coniferyl aldehyde</KM>
        <Vmax evidence="2 3">217.39 pmol/sec/ug enzyme with 4-nitrobenzaldehyde as substrate</Vmax>
        <Vmax evidence="2 3">0.368 pmol/sec/ug enzyme with perakine as substrate</Vmax>
        <Vmax evidence="2 3">1.11 pmol/sec/ug enzyme with coniferyl aldehyde as substrate</Vmax>
    </kinetics>
    <phDependence>
        <text evidence="2 3">Optimum pH is 7.0.</text>
    </phDependence>
    <temperatureDependence>
        <text evidence="2 3">Optimum temperature is 50 degrees Celsius.</text>
    </temperatureDependence>
</comment>
<comment type="similarity">
    <text evidence="4">Belongs to the aldo/keto reductase family.</text>
</comment>
<sequence>MPRVKLGTQGLEVSKLGFGCMGLSGDYNDALPEEQGIAVIKEAFNCGITFFDTSDIYGENGSNEELLGKALKQLPREKIQVGTKFGIHEIGFSGVKAKGTPDYVRSCCEASLKRLDVDYIDLFYIHRIDTTVPIEITMGELKKLVEEGKIKYVGLSEASPDTIRRAHAVHPVTALQIEYSLWTRDIEDEIVPLCRQLGIGIVPYSPIGRGLFAGKAIKESLPENSVLTSHPRFVGENLEKNKQIYYRIEALSQKHGCTPVQLALAWVLHQGEDVVPIPGTTKIKNLHNNVGALKVKLTKEDLKEISDAVPLDEVAGESIHEVIAVTNWKFANTPPLK</sequence>
<gene>
    <name type="primary">PR</name>
</gene>